<sequence length="125" mass="13307">MSKVQEVIDIVKQMTVLELSELVKALEEEFGVSAAAPVAVAAAPAAGAVAEAVEEQYEFDVILTSSGEKKINVIKVVREITGLGLKEAKTLVDECPNPVKEKITKEEANEIKAKIEEAGGSVEVK</sequence>
<accession>Q0AUH0</accession>
<keyword id="KW-1185">Reference proteome</keyword>
<keyword id="KW-0687">Ribonucleoprotein</keyword>
<keyword id="KW-0689">Ribosomal protein</keyword>
<gene>
    <name evidence="1" type="primary">rplL</name>
    <name type="ordered locus">Swol_2343</name>
</gene>
<organism>
    <name type="scientific">Syntrophomonas wolfei subsp. wolfei (strain DSM 2245B / Goettingen)</name>
    <dbReference type="NCBI Taxonomy" id="335541"/>
    <lineage>
        <taxon>Bacteria</taxon>
        <taxon>Bacillati</taxon>
        <taxon>Bacillota</taxon>
        <taxon>Clostridia</taxon>
        <taxon>Eubacteriales</taxon>
        <taxon>Syntrophomonadaceae</taxon>
        <taxon>Syntrophomonas</taxon>
    </lineage>
</organism>
<name>RL7_SYNWW</name>
<reference key="1">
    <citation type="journal article" date="2010" name="Environ. Microbiol.">
        <title>The genome of Syntrophomonas wolfei: new insights into syntrophic metabolism and biohydrogen production.</title>
        <authorList>
            <person name="Sieber J.R."/>
            <person name="Sims D.R."/>
            <person name="Han C."/>
            <person name="Kim E."/>
            <person name="Lykidis A."/>
            <person name="Lapidus A.L."/>
            <person name="McDonnald E."/>
            <person name="Rohlin L."/>
            <person name="Culley D.E."/>
            <person name="Gunsalus R."/>
            <person name="McInerney M.J."/>
        </authorList>
    </citation>
    <scope>NUCLEOTIDE SEQUENCE [LARGE SCALE GENOMIC DNA]</scope>
    <source>
        <strain>DSM 2245B / Goettingen</strain>
    </source>
</reference>
<proteinExistence type="inferred from homology"/>
<comment type="function">
    <text evidence="1">Forms part of the ribosomal stalk which helps the ribosome interact with GTP-bound translation factors. Is thus essential for accurate translation.</text>
</comment>
<comment type="subunit">
    <text evidence="1">Homodimer. Part of the ribosomal stalk of the 50S ribosomal subunit. Forms a multimeric L10(L12)X complex, where L10 forms an elongated spine to which 2 to 4 L12 dimers bind in a sequential fashion. Binds GTP-bound translation factors.</text>
</comment>
<comment type="similarity">
    <text evidence="1">Belongs to the bacterial ribosomal protein bL12 family.</text>
</comment>
<dbReference type="EMBL" id="CP000448">
    <property type="protein sequence ID" value="ABI69634.1"/>
    <property type="molecule type" value="Genomic_DNA"/>
</dbReference>
<dbReference type="RefSeq" id="WP_011641718.1">
    <property type="nucleotide sequence ID" value="NC_008346.1"/>
</dbReference>
<dbReference type="SMR" id="Q0AUH0"/>
<dbReference type="STRING" id="335541.Swol_2343"/>
<dbReference type="KEGG" id="swo:Swol_2343"/>
<dbReference type="eggNOG" id="COG0222">
    <property type="taxonomic scope" value="Bacteria"/>
</dbReference>
<dbReference type="HOGENOM" id="CLU_086499_3_2_9"/>
<dbReference type="OrthoDB" id="9811748at2"/>
<dbReference type="Proteomes" id="UP000001968">
    <property type="component" value="Chromosome"/>
</dbReference>
<dbReference type="GO" id="GO:0022625">
    <property type="term" value="C:cytosolic large ribosomal subunit"/>
    <property type="evidence" value="ECO:0007669"/>
    <property type="project" value="TreeGrafter"/>
</dbReference>
<dbReference type="GO" id="GO:0003729">
    <property type="term" value="F:mRNA binding"/>
    <property type="evidence" value="ECO:0007669"/>
    <property type="project" value="TreeGrafter"/>
</dbReference>
<dbReference type="GO" id="GO:0003735">
    <property type="term" value="F:structural constituent of ribosome"/>
    <property type="evidence" value="ECO:0007669"/>
    <property type="project" value="InterPro"/>
</dbReference>
<dbReference type="GO" id="GO:0006412">
    <property type="term" value="P:translation"/>
    <property type="evidence" value="ECO:0007669"/>
    <property type="project" value="UniProtKB-UniRule"/>
</dbReference>
<dbReference type="CDD" id="cd00387">
    <property type="entry name" value="Ribosomal_L7_L12"/>
    <property type="match status" value="1"/>
</dbReference>
<dbReference type="FunFam" id="3.30.1390.10:FF:000001">
    <property type="entry name" value="50S ribosomal protein L7/L12"/>
    <property type="match status" value="1"/>
</dbReference>
<dbReference type="Gene3D" id="3.30.1390.10">
    <property type="match status" value="1"/>
</dbReference>
<dbReference type="Gene3D" id="1.20.5.710">
    <property type="entry name" value="Single helix bin"/>
    <property type="match status" value="1"/>
</dbReference>
<dbReference type="HAMAP" id="MF_00368">
    <property type="entry name" value="Ribosomal_bL12"/>
    <property type="match status" value="1"/>
</dbReference>
<dbReference type="InterPro" id="IPR000206">
    <property type="entry name" value="Ribosomal_bL12"/>
</dbReference>
<dbReference type="InterPro" id="IPR013823">
    <property type="entry name" value="Ribosomal_bL12_C"/>
</dbReference>
<dbReference type="InterPro" id="IPR014719">
    <property type="entry name" value="Ribosomal_bL12_C/ClpS-like"/>
</dbReference>
<dbReference type="InterPro" id="IPR008932">
    <property type="entry name" value="Ribosomal_bL12_oligo"/>
</dbReference>
<dbReference type="InterPro" id="IPR036235">
    <property type="entry name" value="Ribosomal_bL12_oligo_N_sf"/>
</dbReference>
<dbReference type="NCBIfam" id="TIGR00855">
    <property type="entry name" value="L12"/>
    <property type="match status" value="1"/>
</dbReference>
<dbReference type="PANTHER" id="PTHR45987">
    <property type="entry name" value="39S RIBOSOMAL PROTEIN L12"/>
    <property type="match status" value="1"/>
</dbReference>
<dbReference type="PANTHER" id="PTHR45987:SF4">
    <property type="entry name" value="LARGE RIBOSOMAL SUBUNIT PROTEIN BL12M"/>
    <property type="match status" value="1"/>
</dbReference>
<dbReference type="Pfam" id="PF00542">
    <property type="entry name" value="Ribosomal_L12"/>
    <property type="match status" value="1"/>
</dbReference>
<dbReference type="Pfam" id="PF16320">
    <property type="entry name" value="Ribosomal_L12_N"/>
    <property type="match status" value="1"/>
</dbReference>
<dbReference type="SUPFAM" id="SSF54736">
    <property type="entry name" value="ClpS-like"/>
    <property type="match status" value="1"/>
</dbReference>
<dbReference type="SUPFAM" id="SSF48300">
    <property type="entry name" value="Ribosomal protein L7/12, oligomerisation (N-terminal) domain"/>
    <property type="match status" value="1"/>
</dbReference>
<protein>
    <recommendedName>
        <fullName evidence="1">Large ribosomal subunit protein bL12</fullName>
    </recommendedName>
    <alternativeName>
        <fullName evidence="2">50S ribosomal protein L7/L12</fullName>
    </alternativeName>
</protein>
<evidence type="ECO:0000255" key="1">
    <source>
        <dbReference type="HAMAP-Rule" id="MF_00368"/>
    </source>
</evidence>
<evidence type="ECO:0000305" key="2"/>
<feature type="chain" id="PRO_1000007105" description="Large ribosomal subunit protein bL12">
    <location>
        <begin position="1"/>
        <end position="125"/>
    </location>
</feature>